<name>NUOK_XANCP</name>
<protein>
    <recommendedName>
        <fullName evidence="1">NADH-quinone oxidoreductase subunit K</fullName>
        <ecNumber evidence="1">7.1.1.-</ecNumber>
    </recommendedName>
    <alternativeName>
        <fullName evidence="1">NADH dehydrogenase I subunit K</fullName>
    </alternativeName>
    <alternativeName>
        <fullName evidence="1">NDH-1 subunit K</fullName>
    </alternativeName>
</protein>
<comment type="function">
    <text evidence="1">NDH-1 shuttles electrons from NADH, via FMN and iron-sulfur (Fe-S) centers, to quinones in the respiratory chain. The immediate electron acceptor for the enzyme in this species is believed to be ubiquinone. Couples the redox reaction to proton translocation (for every two electrons transferred, four hydrogen ions are translocated across the cytoplasmic membrane), and thus conserves the redox energy in a proton gradient.</text>
</comment>
<comment type="catalytic activity">
    <reaction evidence="1">
        <text>a quinone + NADH + 5 H(+)(in) = a quinol + NAD(+) + 4 H(+)(out)</text>
        <dbReference type="Rhea" id="RHEA:57888"/>
        <dbReference type="ChEBI" id="CHEBI:15378"/>
        <dbReference type="ChEBI" id="CHEBI:24646"/>
        <dbReference type="ChEBI" id="CHEBI:57540"/>
        <dbReference type="ChEBI" id="CHEBI:57945"/>
        <dbReference type="ChEBI" id="CHEBI:132124"/>
    </reaction>
</comment>
<comment type="subunit">
    <text evidence="1">NDH-1 is composed of 14 different subunits. Subunits NuoA, H, J, K, L, M, N constitute the membrane sector of the complex.</text>
</comment>
<comment type="subcellular location">
    <subcellularLocation>
        <location evidence="1">Cell inner membrane</location>
        <topology evidence="1">Multi-pass membrane protein</topology>
    </subcellularLocation>
</comment>
<comment type="similarity">
    <text evidence="1">Belongs to the complex I subunit 4L family.</text>
</comment>
<accession>Q7CLR2</accession>
<proteinExistence type="inferred from homology"/>
<gene>
    <name evidence="1" type="primary">nuoK</name>
    <name type="ordered locus">XCC2518</name>
</gene>
<dbReference type="EC" id="7.1.1.-" evidence="1"/>
<dbReference type="EMBL" id="AE008922">
    <property type="protein sequence ID" value="AAM41791.1"/>
    <property type="molecule type" value="Genomic_DNA"/>
</dbReference>
<dbReference type="RefSeq" id="NP_637867.1">
    <property type="nucleotide sequence ID" value="NC_003902.1"/>
</dbReference>
<dbReference type="RefSeq" id="WP_005914274.1">
    <property type="nucleotide sequence ID" value="NC_003902.1"/>
</dbReference>
<dbReference type="SMR" id="Q7CLR2"/>
<dbReference type="STRING" id="190485.XCC2518"/>
<dbReference type="EnsemblBacteria" id="AAM41791">
    <property type="protein sequence ID" value="AAM41791"/>
    <property type="gene ID" value="XCC2518"/>
</dbReference>
<dbReference type="GeneID" id="97510981"/>
<dbReference type="KEGG" id="xcc:XCC2518"/>
<dbReference type="PATRIC" id="fig|190485.4.peg.2684"/>
<dbReference type="eggNOG" id="COG0713">
    <property type="taxonomic scope" value="Bacteria"/>
</dbReference>
<dbReference type="HOGENOM" id="CLU_144724_2_0_6"/>
<dbReference type="OrthoDB" id="9801357at2"/>
<dbReference type="PRO" id="PR:Q7CLR2"/>
<dbReference type="Proteomes" id="UP000001010">
    <property type="component" value="Chromosome"/>
</dbReference>
<dbReference type="GO" id="GO:0030964">
    <property type="term" value="C:NADH dehydrogenase complex"/>
    <property type="evidence" value="ECO:0000318"/>
    <property type="project" value="GO_Central"/>
</dbReference>
<dbReference type="GO" id="GO:0005886">
    <property type="term" value="C:plasma membrane"/>
    <property type="evidence" value="ECO:0007669"/>
    <property type="project" value="UniProtKB-SubCell"/>
</dbReference>
<dbReference type="GO" id="GO:0050136">
    <property type="term" value="F:NADH:ubiquinone reductase (non-electrogenic) activity"/>
    <property type="evidence" value="ECO:0007669"/>
    <property type="project" value="UniProtKB-UniRule"/>
</dbReference>
<dbReference type="GO" id="GO:0048038">
    <property type="term" value="F:quinone binding"/>
    <property type="evidence" value="ECO:0007669"/>
    <property type="project" value="UniProtKB-KW"/>
</dbReference>
<dbReference type="GO" id="GO:0042773">
    <property type="term" value="P:ATP synthesis coupled electron transport"/>
    <property type="evidence" value="ECO:0007669"/>
    <property type="project" value="InterPro"/>
</dbReference>
<dbReference type="FunFam" id="1.10.287.3510:FF:000001">
    <property type="entry name" value="NADH-quinone oxidoreductase subunit K"/>
    <property type="match status" value="1"/>
</dbReference>
<dbReference type="Gene3D" id="1.10.287.3510">
    <property type="match status" value="1"/>
</dbReference>
<dbReference type="HAMAP" id="MF_01456">
    <property type="entry name" value="NDH1_NuoK"/>
    <property type="match status" value="1"/>
</dbReference>
<dbReference type="InterPro" id="IPR001133">
    <property type="entry name" value="NADH_UbQ_OxRdtase_chain4L/K"/>
</dbReference>
<dbReference type="InterPro" id="IPR039428">
    <property type="entry name" value="NUOK/Mnh_C1-like"/>
</dbReference>
<dbReference type="NCBIfam" id="NF004320">
    <property type="entry name" value="PRK05715.1-2"/>
    <property type="match status" value="1"/>
</dbReference>
<dbReference type="NCBIfam" id="NF004321">
    <property type="entry name" value="PRK05715.1-3"/>
    <property type="match status" value="1"/>
</dbReference>
<dbReference type="NCBIfam" id="NF004323">
    <property type="entry name" value="PRK05715.1-5"/>
    <property type="match status" value="1"/>
</dbReference>
<dbReference type="PANTHER" id="PTHR11434:SF21">
    <property type="entry name" value="NADH DEHYDROGENASE SUBUNIT 4L-RELATED"/>
    <property type="match status" value="1"/>
</dbReference>
<dbReference type="PANTHER" id="PTHR11434">
    <property type="entry name" value="NADH-UBIQUINONE OXIDOREDUCTASE SUBUNIT ND4L"/>
    <property type="match status" value="1"/>
</dbReference>
<dbReference type="Pfam" id="PF00420">
    <property type="entry name" value="Oxidored_q2"/>
    <property type="match status" value="1"/>
</dbReference>
<evidence type="ECO:0000255" key="1">
    <source>
        <dbReference type="HAMAP-Rule" id="MF_01456"/>
    </source>
</evidence>
<feature type="chain" id="PRO_0000390273" description="NADH-quinone oxidoreductase subunit K">
    <location>
        <begin position="1"/>
        <end position="101"/>
    </location>
</feature>
<feature type="transmembrane region" description="Helical" evidence="1">
    <location>
        <begin position="4"/>
        <end position="24"/>
    </location>
</feature>
<feature type="transmembrane region" description="Helical" evidence="1">
    <location>
        <begin position="30"/>
        <end position="50"/>
    </location>
</feature>
<feature type="transmembrane region" description="Helical" evidence="1">
    <location>
        <begin position="62"/>
        <end position="82"/>
    </location>
</feature>
<sequence>MITLGHLLGLGAVLFCISLAGIFLNRKNVIVLLMSIELMLLSVNVNFIAFSRELGDTAGQLFVFFILTVAAAEAAIGLAILVTLFRTRRTINVAEVDTLKG</sequence>
<reference key="1">
    <citation type="journal article" date="2002" name="Nature">
        <title>Comparison of the genomes of two Xanthomonas pathogens with differing host specificities.</title>
        <authorList>
            <person name="da Silva A.C.R."/>
            <person name="Ferro J.A."/>
            <person name="Reinach F.C."/>
            <person name="Farah C.S."/>
            <person name="Furlan L.R."/>
            <person name="Quaggio R.B."/>
            <person name="Monteiro-Vitorello C.B."/>
            <person name="Van Sluys M.A."/>
            <person name="Almeida N.F. Jr."/>
            <person name="Alves L.M.C."/>
            <person name="do Amaral A.M."/>
            <person name="Bertolini M.C."/>
            <person name="Camargo L.E.A."/>
            <person name="Camarotte G."/>
            <person name="Cannavan F."/>
            <person name="Cardozo J."/>
            <person name="Chambergo F."/>
            <person name="Ciapina L.P."/>
            <person name="Cicarelli R.M.B."/>
            <person name="Coutinho L.L."/>
            <person name="Cursino-Santos J.R."/>
            <person name="El-Dorry H."/>
            <person name="Faria J.B."/>
            <person name="Ferreira A.J.S."/>
            <person name="Ferreira R.C.C."/>
            <person name="Ferro M.I.T."/>
            <person name="Formighieri E.F."/>
            <person name="Franco M.C."/>
            <person name="Greggio C.C."/>
            <person name="Gruber A."/>
            <person name="Katsuyama A.M."/>
            <person name="Kishi L.T."/>
            <person name="Leite R.P."/>
            <person name="Lemos E.G.M."/>
            <person name="Lemos M.V.F."/>
            <person name="Locali E.C."/>
            <person name="Machado M.A."/>
            <person name="Madeira A.M.B.N."/>
            <person name="Martinez-Rossi N.M."/>
            <person name="Martins E.C."/>
            <person name="Meidanis J."/>
            <person name="Menck C.F.M."/>
            <person name="Miyaki C.Y."/>
            <person name="Moon D.H."/>
            <person name="Moreira L.M."/>
            <person name="Novo M.T.M."/>
            <person name="Okura V.K."/>
            <person name="Oliveira M.C."/>
            <person name="Oliveira V.R."/>
            <person name="Pereira H.A."/>
            <person name="Rossi A."/>
            <person name="Sena J.A.D."/>
            <person name="Silva C."/>
            <person name="de Souza R.F."/>
            <person name="Spinola L.A.F."/>
            <person name="Takita M.A."/>
            <person name="Tamura R.E."/>
            <person name="Teixeira E.C."/>
            <person name="Tezza R.I.D."/>
            <person name="Trindade dos Santos M."/>
            <person name="Truffi D."/>
            <person name="Tsai S.M."/>
            <person name="White F.F."/>
            <person name="Setubal J.C."/>
            <person name="Kitajima J.P."/>
        </authorList>
    </citation>
    <scope>NUCLEOTIDE SEQUENCE [LARGE SCALE GENOMIC DNA]</scope>
    <source>
        <strain>ATCC 33913 / DSM 3586 / NCPPB 528 / LMG 568 / P 25</strain>
    </source>
</reference>
<keyword id="KW-0997">Cell inner membrane</keyword>
<keyword id="KW-1003">Cell membrane</keyword>
<keyword id="KW-0472">Membrane</keyword>
<keyword id="KW-0520">NAD</keyword>
<keyword id="KW-0874">Quinone</keyword>
<keyword id="KW-1185">Reference proteome</keyword>
<keyword id="KW-1278">Translocase</keyword>
<keyword id="KW-0812">Transmembrane</keyword>
<keyword id="KW-1133">Transmembrane helix</keyword>
<keyword id="KW-0813">Transport</keyword>
<keyword id="KW-0830">Ubiquinone</keyword>
<organism>
    <name type="scientific">Xanthomonas campestris pv. campestris (strain ATCC 33913 / DSM 3586 / NCPPB 528 / LMG 568 / P 25)</name>
    <dbReference type="NCBI Taxonomy" id="190485"/>
    <lineage>
        <taxon>Bacteria</taxon>
        <taxon>Pseudomonadati</taxon>
        <taxon>Pseudomonadota</taxon>
        <taxon>Gammaproteobacteria</taxon>
        <taxon>Lysobacterales</taxon>
        <taxon>Lysobacteraceae</taxon>
        <taxon>Xanthomonas</taxon>
    </lineage>
</organism>